<organism>
    <name type="scientific">Nostoc sp. (strain PCC 7120 / SAG 25.82 / UTEX 2576)</name>
    <dbReference type="NCBI Taxonomy" id="103690"/>
    <lineage>
        <taxon>Bacteria</taxon>
        <taxon>Bacillati</taxon>
        <taxon>Cyanobacteriota</taxon>
        <taxon>Cyanophyceae</taxon>
        <taxon>Nostocales</taxon>
        <taxon>Nostocaceae</taxon>
        <taxon>Nostoc</taxon>
    </lineage>
</organism>
<reference key="1">
    <citation type="journal article" date="2001" name="DNA Res.">
        <title>Complete genomic sequence of the filamentous nitrogen-fixing cyanobacterium Anabaena sp. strain PCC 7120.</title>
        <authorList>
            <person name="Kaneko T."/>
            <person name="Nakamura Y."/>
            <person name="Wolk C.P."/>
            <person name="Kuritz T."/>
            <person name="Sasamoto S."/>
            <person name="Watanabe A."/>
            <person name="Iriguchi M."/>
            <person name="Ishikawa A."/>
            <person name="Kawashima K."/>
            <person name="Kimura T."/>
            <person name="Kishida Y."/>
            <person name="Kohara M."/>
            <person name="Matsumoto M."/>
            <person name="Matsuno A."/>
            <person name="Muraki A."/>
            <person name="Nakazaki N."/>
            <person name="Shimpo S."/>
            <person name="Sugimoto M."/>
            <person name="Takazawa M."/>
            <person name="Yamada M."/>
            <person name="Yasuda M."/>
            <person name="Tabata S."/>
        </authorList>
    </citation>
    <scope>NUCLEOTIDE SEQUENCE [LARGE SCALE GENOMIC DNA]</scope>
    <source>
        <strain>PCC 7120 / SAG 25.82 / UTEX 2576</strain>
    </source>
</reference>
<gene>
    <name type="ordered locus">asl4034</name>
</gene>
<evidence type="ECO:0000305" key="1"/>
<dbReference type="EMBL" id="BA000019">
    <property type="protein sequence ID" value="BAB75733.1"/>
    <property type="molecule type" value="Genomic_DNA"/>
</dbReference>
<dbReference type="PIR" id="AC2310">
    <property type="entry name" value="AC2310"/>
</dbReference>
<dbReference type="RefSeq" id="WP_010998174.1">
    <property type="nucleotide sequence ID" value="NZ_RSCN01000023.1"/>
</dbReference>
<dbReference type="STRING" id="103690.gene:10496077"/>
<dbReference type="KEGG" id="ana:asl4034"/>
<dbReference type="eggNOG" id="ENOG5032ZTM">
    <property type="taxonomic scope" value="Bacteria"/>
</dbReference>
<dbReference type="OrthoDB" id="488745at2"/>
<dbReference type="Proteomes" id="UP000002483">
    <property type="component" value="Chromosome"/>
</dbReference>
<protein>
    <recommendedName>
        <fullName>UPF0426 protein asl4034</fullName>
    </recommendedName>
</protein>
<proteinExistence type="inferred from homology"/>
<accession>Q8YQ06</accession>
<name>Y4034_NOSS1</name>
<feature type="chain" id="PRO_0000286544" description="UPF0426 protein asl4034">
    <location>
        <begin position="1"/>
        <end position="72"/>
    </location>
</feature>
<comment type="similarity">
    <text evidence="1">Belongs to the UPF0426 family.</text>
</comment>
<keyword id="KW-1185">Reference proteome</keyword>
<sequence>MFIDELSPIFKQLVQHPASFLGGFASGVLRLNLADDPVKSWLDKQRGVNSYSFPVTDAHNGKASGPQSISID</sequence>